<evidence type="ECO:0000255" key="1">
    <source>
        <dbReference type="HAMAP-Rule" id="MF_00508"/>
    </source>
</evidence>
<evidence type="ECO:0000305" key="2"/>
<name>RS10_FRACC</name>
<gene>
    <name evidence="1" type="primary">rpsJ</name>
    <name type="ordered locus">Francci3_0581</name>
</gene>
<organism>
    <name type="scientific">Frankia casuarinae (strain DSM 45818 / CECT 9043 / HFP020203 / CcI3)</name>
    <dbReference type="NCBI Taxonomy" id="106370"/>
    <lineage>
        <taxon>Bacteria</taxon>
        <taxon>Bacillati</taxon>
        <taxon>Actinomycetota</taxon>
        <taxon>Actinomycetes</taxon>
        <taxon>Frankiales</taxon>
        <taxon>Frankiaceae</taxon>
        <taxon>Frankia</taxon>
    </lineage>
</organism>
<dbReference type="EMBL" id="CP000249">
    <property type="protein sequence ID" value="ABD09965.1"/>
    <property type="molecule type" value="Genomic_DNA"/>
</dbReference>
<dbReference type="RefSeq" id="WP_007514815.1">
    <property type="nucleotide sequence ID" value="NZ_LRTJ01000013.1"/>
</dbReference>
<dbReference type="SMR" id="Q2JFH7"/>
<dbReference type="STRING" id="106370.Francci3_0581"/>
<dbReference type="KEGG" id="fra:Francci3_0581"/>
<dbReference type="eggNOG" id="COG0051">
    <property type="taxonomic scope" value="Bacteria"/>
</dbReference>
<dbReference type="HOGENOM" id="CLU_122625_1_3_11"/>
<dbReference type="OrthoDB" id="9804464at2"/>
<dbReference type="PhylomeDB" id="Q2JFH7"/>
<dbReference type="Proteomes" id="UP000001937">
    <property type="component" value="Chromosome"/>
</dbReference>
<dbReference type="GO" id="GO:1990904">
    <property type="term" value="C:ribonucleoprotein complex"/>
    <property type="evidence" value="ECO:0007669"/>
    <property type="project" value="UniProtKB-KW"/>
</dbReference>
<dbReference type="GO" id="GO:0005840">
    <property type="term" value="C:ribosome"/>
    <property type="evidence" value="ECO:0007669"/>
    <property type="project" value="UniProtKB-KW"/>
</dbReference>
<dbReference type="GO" id="GO:0003735">
    <property type="term" value="F:structural constituent of ribosome"/>
    <property type="evidence" value="ECO:0007669"/>
    <property type="project" value="InterPro"/>
</dbReference>
<dbReference type="GO" id="GO:0000049">
    <property type="term" value="F:tRNA binding"/>
    <property type="evidence" value="ECO:0007669"/>
    <property type="project" value="UniProtKB-UniRule"/>
</dbReference>
<dbReference type="GO" id="GO:0006412">
    <property type="term" value="P:translation"/>
    <property type="evidence" value="ECO:0007669"/>
    <property type="project" value="UniProtKB-UniRule"/>
</dbReference>
<dbReference type="FunFam" id="3.30.70.600:FF:000001">
    <property type="entry name" value="30S ribosomal protein S10"/>
    <property type="match status" value="1"/>
</dbReference>
<dbReference type="Gene3D" id="3.30.70.600">
    <property type="entry name" value="Ribosomal protein S10 domain"/>
    <property type="match status" value="1"/>
</dbReference>
<dbReference type="HAMAP" id="MF_00508">
    <property type="entry name" value="Ribosomal_uS10"/>
    <property type="match status" value="1"/>
</dbReference>
<dbReference type="InterPro" id="IPR001848">
    <property type="entry name" value="Ribosomal_uS10"/>
</dbReference>
<dbReference type="InterPro" id="IPR018268">
    <property type="entry name" value="Ribosomal_uS10_CS"/>
</dbReference>
<dbReference type="InterPro" id="IPR027486">
    <property type="entry name" value="Ribosomal_uS10_dom"/>
</dbReference>
<dbReference type="InterPro" id="IPR036838">
    <property type="entry name" value="Ribosomal_uS10_dom_sf"/>
</dbReference>
<dbReference type="NCBIfam" id="NF001861">
    <property type="entry name" value="PRK00596.1"/>
    <property type="match status" value="1"/>
</dbReference>
<dbReference type="NCBIfam" id="TIGR01049">
    <property type="entry name" value="rpsJ_bact"/>
    <property type="match status" value="1"/>
</dbReference>
<dbReference type="PANTHER" id="PTHR11700">
    <property type="entry name" value="30S RIBOSOMAL PROTEIN S10 FAMILY MEMBER"/>
    <property type="match status" value="1"/>
</dbReference>
<dbReference type="Pfam" id="PF00338">
    <property type="entry name" value="Ribosomal_S10"/>
    <property type="match status" value="1"/>
</dbReference>
<dbReference type="PRINTS" id="PR00971">
    <property type="entry name" value="RIBOSOMALS10"/>
</dbReference>
<dbReference type="SMART" id="SM01403">
    <property type="entry name" value="Ribosomal_S10"/>
    <property type="match status" value="1"/>
</dbReference>
<dbReference type="SUPFAM" id="SSF54999">
    <property type="entry name" value="Ribosomal protein S10"/>
    <property type="match status" value="1"/>
</dbReference>
<dbReference type="PROSITE" id="PS00361">
    <property type="entry name" value="RIBOSOMAL_S10"/>
    <property type="match status" value="1"/>
</dbReference>
<accession>Q2JFH7</accession>
<sequence length="102" mass="11647">MAAQKIRIRLKAYDHEVIDSSARKIVETVTRTGAQVAGPVPLPTEKNIYCVIRSPHKYKDSREHFEMRTHKRLIDILDPTPKTVDSLMRLDLPAGVDIEIKL</sequence>
<comment type="function">
    <text evidence="1">Involved in the binding of tRNA to the ribosomes.</text>
</comment>
<comment type="subunit">
    <text evidence="1">Part of the 30S ribosomal subunit.</text>
</comment>
<comment type="similarity">
    <text evidence="1">Belongs to the universal ribosomal protein uS10 family.</text>
</comment>
<protein>
    <recommendedName>
        <fullName evidence="1">Small ribosomal subunit protein uS10</fullName>
    </recommendedName>
    <alternativeName>
        <fullName evidence="2">30S ribosomal protein S10</fullName>
    </alternativeName>
</protein>
<feature type="chain" id="PRO_0000237046" description="Small ribosomal subunit protein uS10">
    <location>
        <begin position="1"/>
        <end position="102"/>
    </location>
</feature>
<reference key="1">
    <citation type="journal article" date="2007" name="Genome Res.">
        <title>Genome characteristics of facultatively symbiotic Frankia sp. strains reflect host range and host plant biogeography.</title>
        <authorList>
            <person name="Normand P."/>
            <person name="Lapierre P."/>
            <person name="Tisa L.S."/>
            <person name="Gogarten J.P."/>
            <person name="Alloisio N."/>
            <person name="Bagnarol E."/>
            <person name="Bassi C.A."/>
            <person name="Berry A.M."/>
            <person name="Bickhart D.M."/>
            <person name="Choisne N."/>
            <person name="Couloux A."/>
            <person name="Cournoyer B."/>
            <person name="Cruveiller S."/>
            <person name="Daubin V."/>
            <person name="Demange N."/>
            <person name="Francino M.P."/>
            <person name="Goltsman E."/>
            <person name="Huang Y."/>
            <person name="Kopp O.R."/>
            <person name="Labarre L."/>
            <person name="Lapidus A."/>
            <person name="Lavire C."/>
            <person name="Marechal J."/>
            <person name="Martinez M."/>
            <person name="Mastronunzio J.E."/>
            <person name="Mullin B.C."/>
            <person name="Niemann J."/>
            <person name="Pujic P."/>
            <person name="Rawnsley T."/>
            <person name="Rouy Z."/>
            <person name="Schenowitz C."/>
            <person name="Sellstedt A."/>
            <person name="Tavares F."/>
            <person name="Tomkins J.P."/>
            <person name="Vallenet D."/>
            <person name="Valverde C."/>
            <person name="Wall L.G."/>
            <person name="Wang Y."/>
            <person name="Medigue C."/>
            <person name="Benson D.R."/>
        </authorList>
    </citation>
    <scope>NUCLEOTIDE SEQUENCE [LARGE SCALE GENOMIC DNA]</scope>
    <source>
        <strain>DSM 45818 / CECT 9043 / HFP020203 / CcI3</strain>
    </source>
</reference>
<keyword id="KW-1185">Reference proteome</keyword>
<keyword id="KW-0687">Ribonucleoprotein</keyword>
<keyword id="KW-0689">Ribosomal protein</keyword>
<proteinExistence type="inferred from homology"/>